<keyword id="KW-1015">Disulfide bond</keyword>
<keyword id="KW-0590">Pheromone-binding</keyword>
<keyword id="KW-1185">Reference proteome</keyword>
<keyword id="KW-0964">Secreted</keyword>
<keyword id="KW-0732">Signal</keyword>
<keyword id="KW-0813">Transport</keyword>
<protein>
    <recommendedName>
        <fullName>Vomeronasal secretory protein 2</fullName>
    </recommendedName>
    <alternativeName>
        <fullName>Lipocalin-4</fullName>
    </alternativeName>
    <alternativeName>
        <fullName>Vomeronasal secretory protein II</fullName>
        <shortName>VNSP II</shortName>
    </alternativeName>
</protein>
<name>VNS2_MOUSE</name>
<sequence>MKSLLLTVTLSSLVATLQTYDDLPFISEEDKLSGVWFIKATVSQRREVEGETLVAFPIKFTCPEEGTLELRHTLASKGECINVGIRLQRTEEPGQYSAFWGHTLFYIYDLPVKDHYIIYCESHPFQKISQFGYLIGKYPEENQDTLEVFKEFIQHKGFLQEKIGVPEQRDRCIPIHDSAHQDHKC</sequence>
<reference key="1">
    <citation type="journal article" date="1994" name="EMBO J.">
        <title>Possible pheromone-carrier function of two lipocalin proteins in the vomeronasal organ.</title>
        <authorList>
            <person name="Miyawaki A."/>
            <person name="Matsushita F."/>
            <person name="Ryo Y."/>
            <person name="Mikoshiba K."/>
        </authorList>
    </citation>
    <scope>NUCLEOTIDE SEQUENCE [MRNA]</scope>
    <source>
        <strain>ddY</strain>
    </source>
</reference>
<accession>Q62472</accession>
<organism>
    <name type="scientific">Mus musculus</name>
    <name type="common">Mouse</name>
    <dbReference type="NCBI Taxonomy" id="10090"/>
    <lineage>
        <taxon>Eukaryota</taxon>
        <taxon>Metazoa</taxon>
        <taxon>Chordata</taxon>
        <taxon>Craniata</taxon>
        <taxon>Vertebrata</taxon>
        <taxon>Euteleostomi</taxon>
        <taxon>Mammalia</taxon>
        <taxon>Eutheria</taxon>
        <taxon>Euarchontoglires</taxon>
        <taxon>Glires</taxon>
        <taxon>Rodentia</taxon>
        <taxon>Myomorpha</taxon>
        <taxon>Muroidea</taxon>
        <taxon>Muridae</taxon>
        <taxon>Murinae</taxon>
        <taxon>Mus</taxon>
        <taxon>Mus</taxon>
    </lineage>
</organism>
<gene>
    <name type="primary">Lcn4</name>
</gene>
<dbReference type="EMBL" id="D38581">
    <property type="protein sequence ID" value="BAA07582.1"/>
    <property type="molecule type" value="mRNA"/>
</dbReference>
<dbReference type="CCDS" id="CCDS15810.1"/>
<dbReference type="PIR" id="S51803">
    <property type="entry name" value="S51803"/>
</dbReference>
<dbReference type="RefSeq" id="NP_034825.1">
    <property type="nucleotide sequence ID" value="NM_010695.1"/>
</dbReference>
<dbReference type="SMR" id="Q62472"/>
<dbReference type="FunCoup" id="Q62472">
    <property type="interactions" value="25"/>
</dbReference>
<dbReference type="STRING" id="10090.ENSMUSP00000028283"/>
<dbReference type="jPOST" id="Q62472"/>
<dbReference type="PaxDb" id="10090-ENSMUSP00000028283"/>
<dbReference type="ProteomicsDB" id="297610"/>
<dbReference type="DNASU" id="16821"/>
<dbReference type="Ensembl" id="ENSMUST00000028283.2">
    <property type="protein sequence ID" value="ENSMUSP00000028283.2"/>
    <property type="gene ID" value="ENSMUSG00000026919.2"/>
</dbReference>
<dbReference type="GeneID" id="16821"/>
<dbReference type="KEGG" id="mmu:16821"/>
<dbReference type="UCSC" id="uc008iwa.1">
    <property type="organism name" value="mouse"/>
</dbReference>
<dbReference type="AGR" id="MGI:102668"/>
<dbReference type="CTD" id="16821"/>
<dbReference type="MGI" id="MGI:102668">
    <property type="gene designation" value="Lcn4"/>
</dbReference>
<dbReference type="VEuPathDB" id="HostDB:ENSMUSG00000026919"/>
<dbReference type="eggNOG" id="ENOG502S22P">
    <property type="taxonomic scope" value="Eukaryota"/>
</dbReference>
<dbReference type="GeneTree" id="ENSGT01050000244868"/>
<dbReference type="HOGENOM" id="CLU_125034_0_0_1"/>
<dbReference type="InParanoid" id="Q62472"/>
<dbReference type="OMA" id="VIEFRIC"/>
<dbReference type="OrthoDB" id="9622591at2759"/>
<dbReference type="PhylomeDB" id="Q62472"/>
<dbReference type="TreeFam" id="TF338197"/>
<dbReference type="BioGRID-ORCS" id="16821">
    <property type="hits" value="2 hits in 78 CRISPR screens"/>
</dbReference>
<dbReference type="PRO" id="PR:Q62472"/>
<dbReference type="Proteomes" id="UP000000589">
    <property type="component" value="Chromosome 2"/>
</dbReference>
<dbReference type="RNAct" id="Q62472">
    <property type="molecule type" value="protein"/>
</dbReference>
<dbReference type="Bgee" id="ENSMUSG00000026919">
    <property type="expression patterns" value="Expressed in olfactory epithelium and 11 other cell types or tissues"/>
</dbReference>
<dbReference type="ExpressionAtlas" id="Q62472">
    <property type="expression patterns" value="baseline and differential"/>
</dbReference>
<dbReference type="GO" id="GO:0005576">
    <property type="term" value="C:extracellular region"/>
    <property type="evidence" value="ECO:0007669"/>
    <property type="project" value="UniProtKB-SubCell"/>
</dbReference>
<dbReference type="GO" id="GO:0005550">
    <property type="term" value="F:pheromone binding"/>
    <property type="evidence" value="ECO:0007669"/>
    <property type="project" value="UniProtKB-KW"/>
</dbReference>
<dbReference type="GO" id="GO:0036094">
    <property type="term" value="F:small molecule binding"/>
    <property type="evidence" value="ECO:0007669"/>
    <property type="project" value="InterPro"/>
</dbReference>
<dbReference type="CDD" id="cd19414">
    <property type="entry name" value="lipocalin_1_3_4_13-like"/>
    <property type="match status" value="1"/>
</dbReference>
<dbReference type="Gene3D" id="2.40.128.20">
    <property type="match status" value="1"/>
</dbReference>
<dbReference type="InterPro" id="IPR012674">
    <property type="entry name" value="Calycin"/>
</dbReference>
<dbReference type="InterPro" id="IPR002345">
    <property type="entry name" value="Lipocalin"/>
</dbReference>
<dbReference type="InterPro" id="IPR000566">
    <property type="entry name" value="Lipocln_cytosolic_FA-bd_dom"/>
</dbReference>
<dbReference type="InterPro" id="IPR002450">
    <property type="entry name" value="von_Ebner_gland"/>
</dbReference>
<dbReference type="PANTHER" id="PTHR11430">
    <property type="entry name" value="LIPOCALIN"/>
    <property type="match status" value="1"/>
</dbReference>
<dbReference type="PANTHER" id="PTHR11430:SF5">
    <property type="entry name" value="VOMERONASAL SECRETORY PROTEIN 2"/>
    <property type="match status" value="1"/>
</dbReference>
<dbReference type="Pfam" id="PF00061">
    <property type="entry name" value="Lipocalin"/>
    <property type="match status" value="1"/>
</dbReference>
<dbReference type="PRINTS" id="PR01175">
    <property type="entry name" value="VNEBNERGLAND"/>
</dbReference>
<dbReference type="SUPFAM" id="SSF50814">
    <property type="entry name" value="Lipocalins"/>
    <property type="match status" value="1"/>
</dbReference>
<feature type="signal peptide" evidence="2">
    <location>
        <begin position="1"/>
        <end position="19"/>
    </location>
</feature>
<feature type="chain" id="PRO_0000017979" description="Vomeronasal secretory protein 2">
    <location>
        <begin position="20"/>
        <end position="185"/>
    </location>
</feature>
<feature type="disulfide bond" evidence="1">
    <location>
        <begin position="80"/>
        <end position="172"/>
    </location>
</feature>
<evidence type="ECO:0000250" key="1"/>
<evidence type="ECO:0000255" key="2"/>
<evidence type="ECO:0000305" key="3"/>
<comment type="function">
    <text>Transport of lipophilic molecules, possible pheromone-carrier.</text>
</comment>
<comment type="subcellular location">
    <subcellularLocation>
        <location>Secreted</location>
    </subcellularLocation>
</comment>
<comment type="tissue specificity">
    <text>Specifically expressed in vomeronasal and posterior glands of the nasal septum, the ducts of which open into the lumen of the vomeronasal organ.</text>
</comment>
<comment type="similarity">
    <text evidence="3">Belongs to the calycin superfamily. Lipocalin family.</text>
</comment>
<proteinExistence type="evidence at transcript level"/>